<evidence type="ECO:0000255" key="1">
    <source>
        <dbReference type="HAMAP-Rule" id="MF_01850"/>
    </source>
</evidence>
<keyword id="KW-0004">4Fe-4S</keyword>
<keyword id="KW-0067">ATP-binding</keyword>
<keyword id="KW-0963">Cytoplasm</keyword>
<keyword id="KW-0408">Iron</keyword>
<keyword id="KW-0411">Iron-sulfur</keyword>
<keyword id="KW-0460">Magnesium</keyword>
<keyword id="KW-0479">Metal-binding</keyword>
<keyword id="KW-0547">Nucleotide-binding</keyword>
<keyword id="KW-0694">RNA-binding</keyword>
<keyword id="KW-0808">Transferase</keyword>
<keyword id="KW-0819">tRNA processing</keyword>
<keyword id="KW-0820">tRNA-binding</keyword>
<dbReference type="EC" id="2.8.1.-" evidence="1"/>
<dbReference type="EMBL" id="CP000036">
    <property type="protein sequence ID" value="ABB66319.1"/>
    <property type="molecule type" value="Genomic_DNA"/>
</dbReference>
<dbReference type="RefSeq" id="WP_001157418.1">
    <property type="nucleotide sequence ID" value="NC_007613.1"/>
</dbReference>
<dbReference type="SMR" id="Q320D9"/>
<dbReference type="KEGG" id="sbo:SBO_1717"/>
<dbReference type="HOGENOM" id="CLU_026481_0_0_6"/>
<dbReference type="Proteomes" id="UP000007067">
    <property type="component" value="Chromosome"/>
</dbReference>
<dbReference type="GO" id="GO:0005737">
    <property type="term" value="C:cytoplasm"/>
    <property type="evidence" value="ECO:0007669"/>
    <property type="project" value="UniProtKB-SubCell"/>
</dbReference>
<dbReference type="GO" id="GO:0051539">
    <property type="term" value="F:4 iron, 4 sulfur cluster binding"/>
    <property type="evidence" value="ECO:0007669"/>
    <property type="project" value="UniProtKB-UniRule"/>
</dbReference>
<dbReference type="GO" id="GO:0005524">
    <property type="term" value="F:ATP binding"/>
    <property type="evidence" value="ECO:0007669"/>
    <property type="project" value="UniProtKB-UniRule"/>
</dbReference>
<dbReference type="GO" id="GO:0000287">
    <property type="term" value="F:magnesium ion binding"/>
    <property type="evidence" value="ECO:0007669"/>
    <property type="project" value="UniProtKB-UniRule"/>
</dbReference>
<dbReference type="GO" id="GO:0016783">
    <property type="term" value="F:sulfurtransferase activity"/>
    <property type="evidence" value="ECO:0007669"/>
    <property type="project" value="UniProtKB-UniRule"/>
</dbReference>
<dbReference type="GO" id="GO:0000049">
    <property type="term" value="F:tRNA binding"/>
    <property type="evidence" value="ECO:0007669"/>
    <property type="project" value="UniProtKB-KW"/>
</dbReference>
<dbReference type="GO" id="GO:0034227">
    <property type="term" value="P:tRNA thio-modification"/>
    <property type="evidence" value="ECO:0007669"/>
    <property type="project" value="UniProtKB-UniRule"/>
</dbReference>
<dbReference type="CDD" id="cd24138">
    <property type="entry name" value="TtcA-like"/>
    <property type="match status" value="1"/>
</dbReference>
<dbReference type="FunFam" id="3.40.50.620:FF:000046">
    <property type="entry name" value="tRNA-cytidine(32) 2-sulfurtransferase"/>
    <property type="match status" value="1"/>
</dbReference>
<dbReference type="Gene3D" id="3.40.50.620">
    <property type="entry name" value="HUPs"/>
    <property type="match status" value="1"/>
</dbReference>
<dbReference type="HAMAP" id="MF_01850">
    <property type="entry name" value="TtcA"/>
    <property type="match status" value="1"/>
</dbReference>
<dbReference type="InterPro" id="IPR014729">
    <property type="entry name" value="Rossmann-like_a/b/a_fold"/>
</dbReference>
<dbReference type="InterPro" id="IPR011063">
    <property type="entry name" value="TilS/TtcA_N"/>
</dbReference>
<dbReference type="InterPro" id="IPR012089">
    <property type="entry name" value="tRNA_Cyd_32_2_STrfase"/>
</dbReference>
<dbReference type="InterPro" id="IPR035107">
    <property type="entry name" value="tRNA_thiolation_TtcA_Ctu1"/>
</dbReference>
<dbReference type="NCBIfam" id="NF007972">
    <property type="entry name" value="PRK10696.1"/>
    <property type="match status" value="1"/>
</dbReference>
<dbReference type="PANTHER" id="PTHR43686:SF1">
    <property type="entry name" value="AMINOTRAN_5 DOMAIN-CONTAINING PROTEIN"/>
    <property type="match status" value="1"/>
</dbReference>
<dbReference type="PANTHER" id="PTHR43686">
    <property type="entry name" value="SULFURTRANSFERASE-RELATED"/>
    <property type="match status" value="1"/>
</dbReference>
<dbReference type="Pfam" id="PF01171">
    <property type="entry name" value="ATP_bind_3"/>
    <property type="match status" value="1"/>
</dbReference>
<dbReference type="PIRSF" id="PIRSF004976">
    <property type="entry name" value="ATPase_YdaO"/>
    <property type="match status" value="1"/>
</dbReference>
<dbReference type="SUPFAM" id="SSF52402">
    <property type="entry name" value="Adenine nucleotide alpha hydrolases-like"/>
    <property type="match status" value="1"/>
</dbReference>
<name>TTCA_SHIBS</name>
<reference key="1">
    <citation type="journal article" date="2005" name="Nucleic Acids Res.">
        <title>Genome dynamics and diversity of Shigella species, the etiologic agents of bacillary dysentery.</title>
        <authorList>
            <person name="Yang F."/>
            <person name="Yang J."/>
            <person name="Zhang X."/>
            <person name="Chen L."/>
            <person name="Jiang Y."/>
            <person name="Yan Y."/>
            <person name="Tang X."/>
            <person name="Wang J."/>
            <person name="Xiong Z."/>
            <person name="Dong J."/>
            <person name="Xue Y."/>
            <person name="Zhu Y."/>
            <person name="Xu X."/>
            <person name="Sun L."/>
            <person name="Chen S."/>
            <person name="Nie H."/>
            <person name="Peng J."/>
            <person name="Xu J."/>
            <person name="Wang Y."/>
            <person name="Yuan Z."/>
            <person name="Wen Y."/>
            <person name="Yao Z."/>
            <person name="Shen Y."/>
            <person name="Qiang B."/>
            <person name="Hou Y."/>
            <person name="Yu J."/>
            <person name="Jin Q."/>
        </authorList>
    </citation>
    <scope>NUCLEOTIDE SEQUENCE [LARGE SCALE GENOMIC DNA]</scope>
    <source>
        <strain>Sb227</strain>
    </source>
</reference>
<sequence>MQENQQITKKEQYSLNKLQKRLRRNVGEAIADFNMIEEGDRIMVCLSGGKDSYTMLEILRNLQQSAPINFSLVAVNLDQKQPGFPEHVLPEYLEKLGVEYKIVEENTYGIVKEKIPEGKTTCSLCSRLRRGILYRTATELGTTKIALGHHRDDILQTLFLNMFYGGKMKGMPPKLMSDDGKHIVIRPLAYCREKDIQRFADAKAFPIIPCNLCGSQPNLQRQVIADMLRDWDKRYPGRIETMFSAMQNVVPSHLCDTNLFDFKGITHGSEVVNGGDLAFDREEIPLQPAGWQPEEDENQLDELRLNVVEVK</sequence>
<organism>
    <name type="scientific">Shigella boydii serotype 4 (strain Sb227)</name>
    <dbReference type="NCBI Taxonomy" id="300268"/>
    <lineage>
        <taxon>Bacteria</taxon>
        <taxon>Pseudomonadati</taxon>
        <taxon>Pseudomonadota</taxon>
        <taxon>Gammaproteobacteria</taxon>
        <taxon>Enterobacterales</taxon>
        <taxon>Enterobacteriaceae</taxon>
        <taxon>Shigella</taxon>
    </lineage>
</organism>
<gene>
    <name evidence="1" type="primary">ttcA</name>
    <name type="ordered locus">SBO_1717</name>
</gene>
<accession>Q320D9</accession>
<protein>
    <recommendedName>
        <fullName evidence="1">tRNA-cytidine(32) 2-sulfurtransferase</fullName>
        <ecNumber evidence="1">2.8.1.-</ecNumber>
    </recommendedName>
    <alternativeName>
        <fullName evidence="1">Two-thiocytidine biosynthesis protein A</fullName>
    </alternativeName>
    <alternativeName>
        <fullName evidence="1">tRNA 2-thiocytidine biosynthesis protein TtcA</fullName>
    </alternativeName>
</protein>
<comment type="function">
    <text evidence="1">Catalyzes the ATP-dependent 2-thiolation of cytidine in position 32 of tRNA, to form 2-thiocytidine (s(2)C32). The sulfur atoms are provided by the cysteine/cysteine desulfurase (IscS) system.</text>
</comment>
<comment type="catalytic activity">
    <reaction evidence="1">
        <text>cytidine(32) in tRNA + S-sulfanyl-L-cysteinyl-[cysteine desulfurase] + AH2 + ATP = 2-thiocytidine(32) in tRNA + L-cysteinyl-[cysteine desulfurase] + A + AMP + diphosphate + H(+)</text>
        <dbReference type="Rhea" id="RHEA:57048"/>
        <dbReference type="Rhea" id="RHEA-COMP:10288"/>
        <dbReference type="Rhea" id="RHEA-COMP:12157"/>
        <dbReference type="Rhea" id="RHEA-COMP:12158"/>
        <dbReference type="Rhea" id="RHEA-COMP:14821"/>
        <dbReference type="ChEBI" id="CHEBI:13193"/>
        <dbReference type="ChEBI" id="CHEBI:15378"/>
        <dbReference type="ChEBI" id="CHEBI:17499"/>
        <dbReference type="ChEBI" id="CHEBI:29950"/>
        <dbReference type="ChEBI" id="CHEBI:30616"/>
        <dbReference type="ChEBI" id="CHEBI:33019"/>
        <dbReference type="ChEBI" id="CHEBI:61963"/>
        <dbReference type="ChEBI" id="CHEBI:82748"/>
        <dbReference type="ChEBI" id="CHEBI:141453"/>
        <dbReference type="ChEBI" id="CHEBI:456215"/>
    </reaction>
    <physiologicalReaction direction="left-to-right" evidence="1">
        <dbReference type="Rhea" id="RHEA:57049"/>
    </physiologicalReaction>
</comment>
<comment type="cofactor">
    <cofactor evidence="1">
        <name>Mg(2+)</name>
        <dbReference type="ChEBI" id="CHEBI:18420"/>
    </cofactor>
</comment>
<comment type="cofactor">
    <cofactor evidence="1">
        <name>[4Fe-4S] cluster</name>
        <dbReference type="ChEBI" id="CHEBI:49883"/>
    </cofactor>
    <text evidence="1">Binds 1 [4Fe-4S] cluster per subunit. The cluster is chelated by three Cys residues, the fourth Fe has a free coordination site that may bind a sulfur atom transferred from the persulfide of IscS.</text>
</comment>
<comment type="pathway">
    <text evidence="1">tRNA modification.</text>
</comment>
<comment type="subunit">
    <text evidence="1">Homodimer.</text>
</comment>
<comment type="subcellular location">
    <subcellularLocation>
        <location evidence="1">Cytoplasm</location>
    </subcellularLocation>
</comment>
<comment type="miscellaneous">
    <text evidence="1">The thiolation reaction likely consists of two steps: a first activation step by ATP to form an adenylated intermediate of the target base of tRNA, and a second nucleophilic substitution step of the sulfur (S) atom supplied by the hydrosulfide attached to the Fe-S cluster.</text>
</comment>
<comment type="similarity">
    <text evidence="1">Belongs to the TtcA family.</text>
</comment>
<feature type="chain" id="PRO_0000348849" description="tRNA-cytidine(32) 2-sulfurtransferase">
    <location>
        <begin position="1"/>
        <end position="311"/>
    </location>
</feature>
<feature type="short sequence motif" description="PP-loop motif" evidence="1">
    <location>
        <begin position="47"/>
        <end position="52"/>
    </location>
</feature>
<feature type="binding site" evidence="1">
    <location>
        <position position="122"/>
    </location>
    <ligand>
        <name>[4Fe-4S] cluster</name>
        <dbReference type="ChEBI" id="CHEBI:49883"/>
    </ligand>
</feature>
<feature type="binding site" evidence="1">
    <location>
        <position position="125"/>
    </location>
    <ligand>
        <name>[4Fe-4S] cluster</name>
        <dbReference type="ChEBI" id="CHEBI:49883"/>
    </ligand>
</feature>
<feature type="binding site" evidence="1">
    <location>
        <position position="213"/>
    </location>
    <ligand>
        <name>[4Fe-4S] cluster</name>
        <dbReference type="ChEBI" id="CHEBI:49883"/>
    </ligand>
</feature>
<proteinExistence type="inferred from homology"/>